<dbReference type="EMBL" id="M30001">
    <property type="protein sequence ID" value="AAB07794.1"/>
    <property type="molecule type" value="Genomic_DNA"/>
</dbReference>
<dbReference type="EMBL" id="AF158101">
    <property type="protein sequence ID" value="AAD42614.1"/>
    <property type="molecule type" value="Genomic_DNA"/>
</dbReference>
<dbReference type="PIR" id="T10135">
    <property type="entry name" value="T10135"/>
</dbReference>
<dbReference type="RefSeq" id="NP_049643.1">
    <property type="nucleotide sequence ID" value="NC_000866.4"/>
</dbReference>
<dbReference type="GeneID" id="1258696"/>
<dbReference type="KEGG" id="vg:1258696"/>
<dbReference type="OrthoDB" id="25995at10239"/>
<dbReference type="Proteomes" id="UP000009087">
    <property type="component" value="Segment"/>
</dbReference>
<keyword id="KW-1185">Reference proteome</keyword>
<organismHost>
    <name type="scientific">Escherichia coli</name>
    <dbReference type="NCBI Taxonomy" id="562"/>
</organismHost>
<organism>
    <name type="scientific">Enterobacteria phage T4</name>
    <name type="common">Bacteriophage T4</name>
    <dbReference type="NCBI Taxonomy" id="10665"/>
    <lineage>
        <taxon>Viruses</taxon>
        <taxon>Duplodnaviria</taxon>
        <taxon>Heunggongvirae</taxon>
        <taxon>Uroviricota</taxon>
        <taxon>Caudoviricetes</taxon>
        <taxon>Straboviridae</taxon>
        <taxon>Tevenvirinae</taxon>
        <taxon>Tequatrovirus</taxon>
    </lineage>
</organism>
<reference key="1">
    <citation type="journal article" date="1990" name="Gene">
        <title>The bacteriophage T4 gene mrh whose product inhibits late T4 gene expression in an Escherichia coli rpoH (sigma 32) mutant.</title>
        <authorList>
            <person name="Frazier M.W."/>
            <person name="Mosig G."/>
        </authorList>
    </citation>
    <scope>NUCLEOTIDE SEQUENCE [GENOMIC DNA]</scope>
</reference>
<reference key="2">
    <citation type="journal article" date="2003" name="Microbiol. Mol. Biol. Rev.">
        <title>Bacteriophage T4 genome.</title>
        <authorList>
            <person name="Miller E.S."/>
            <person name="Kutter E."/>
            <person name="Mosig G."/>
            <person name="Arisaka F."/>
            <person name="Kunisawa T."/>
            <person name="Ruger W."/>
        </authorList>
    </citation>
    <scope>NUCLEOTIDE SEQUENCE [LARGE SCALE GENOMIC DNA]</scope>
</reference>
<name>Y01J_BPT4</name>
<sequence length="68" mass="8258">MLNRWIKPNEDLDIIISRHVMKKYELQPWSTEVVVHSFMMYADGSVEFNVEIRYDYGEKQVEFKRGFL</sequence>
<proteinExistence type="predicted"/>
<feature type="chain" id="PRO_0000165091" description="Uncharacterized 8.3 kDa protein in mrh-soc intergenic region">
    <location>
        <begin position="1"/>
        <end position="68"/>
    </location>
</feature>
<accession>P20704</accession>
<protein>
    <recommendedName>
        <fullName>Uncharacterized 8.3 kDa protein in mrh-soc intergenic region</fullName>
    </recommendedName>
</protein>
<gene>
    <name type="primary">y01J</name>
    <name type="synonym">mrh.2</name>
    <name type="synonym">soc.-1</name>
</gene>